<evidence type="ECO:0000250" key="1"/>
<evidence type="ECO:0000269" key="2">
    <source>
    </source>
</evidence>
<evidence type="ECO:0000305" key="3"/>
<reference key="1">
    <citation type="journal article" date="2002" name="Nature">
        <title>The genome sequence of Schizosaccharomyces pombe.</title>
        <authorList>
            <person name="Wood V."/>
            <person name="Gwilliam R."/>
            <person name="Rajandream M.A."/>
            <person name="Lyne M.H."/>
            <person name="Lyne R."/>
            <person name="Stewart A."/>
            <person name="Sgouros J.G."/>
            <person name="Peat N."/>
            <person name="Hayles J."/>
            <person name="Baker S.G."/>
            <person name="Basham D."/>
            <person name="Bowman S."/>
            <person name="Brooks K."/>
            <person name="Brown D."/>
            <person name="Brown S."/>
            <person name="Chillingworth T."/>
            <person name="Churcher C.M."/>
            <person name="Collins M."/>
            <person name="Connor R."/>
            <person name="Cronin A."/>
            <person name="Davis P."/>
            <person name="Feltwell T."/>
            <person name="Fraser A."/>
            <person name="Gentles S."/>
            <person name="Goble A."/>
            <person name="Hamlin N."/>
            <person name="Harris D.E."/>
            <person name="Hidalgo J."/>
            <person name="Hodgson G."/>
            <person name="Holroyd S."/>
            <person name="Hornsby T."/>
            <person name="Howarth S."/>
            <person name="Huckle E.J."/>
            <person name="Hunt S."/>
            <person name="Jagels K."/>
            <person name="James K.D."/>
            <person name="Jones L."/>
            <person name="Jones M."/>
            <person name="Leather S."/>
            <person name="McDonald S."/>
            <person name="McLean J."/>
            <person name="Mooney P."/>
            <person name="Moule S."/>
            <person name="Mungall K.L."/>
            <person name="Murphy L.D."/>
            <person name="Niblett D."/>
            <person name="Odell C."/>
            <person name="Oliver K."/>
            <person name="O'Neil S."/>
            <person name="Pearson D."/>
            <person name="Quail M.A."/>
            <person name="Rabbinowitsch E."/>
            <person name="Rutherford K.M."/>
            <person name="Rutter S."/>
            <person name="Saunders D."/>
            <person name="Seeger K."/>
            <person name="Sharp S."/>
            <person name="Skelton J."/>
            <person name="Simmonds M.N."/>
            <person name="Squares R."/>
            <person name="Squares S."/>
            <person name="Stevens K."/>
            <person name="Taylor K."/>
            <person name="Taylor R.G."/>
            <person name="Tivey A."/>
            <person name="Walsh S.V."/>
            <person name="Warren T."/>
            <person name="Whitehead S."/>
            <person name="Woodward J.R."/>
            <person name="Volckaert G."/>
            <person name="Aert R."/>
            <person name="Robben J."/>
            <person name="Grymonprez B."/>
            <person name="Weltjens I."/>
            <person name="Vanstreels E."/>
            <person name="Rieger M."/>
            <person name="Schaefer M."/>
            <person name="Mueller-Auer S."/>
            <person name="Gabel C."/>
            <person name="Fuchs M."/>
            <person name="Duesterhoeft A."/>
            <person name="Fritzc C."/>
            <person name="Holzer E."/>
            <person name="Moestl D."/>
            <person name="Hilbert H."/>
            <person name="Borzym K."/>
            <person name="Langer I."/>
            <person name="Beck A."/>
            <person name="Lehrach H."/>
            <person name="Reinhardt R."/>
            <person name="Pohl T.M."/>
            <person name="Eger P."/>
            <person name="Zimmermann W."/>
            <person name="Wedler H."/>
            <person name="Wambutt R."/>
            <person name="Purnelle B."/>
            <person name="Goffeau A."/>
            <person name="Cadieu E."/>
            <person name="Dreano S."/>
            <person name="Gloux S."/>
            <person name="Lelaure V."/>
            <person name="Mottier S."/>
            <person name="Galibert F."/>
            <person name="Aves S.J."/>
            <person name="Xiang Z."/>
            <person name="Hunt C."/>
            <person name="Moore K."/>
            <person name="Hurst S.M."/>
            <person name="Lucas M."/>
            <person name="Rochet M."/>
            <person name="Gaillardin C."/>
            <person name="Tallada V.A."/>
            <person name="Garzon A."/>
            <person name="Thode G."/>
            <person name="Daga R.R."/>
            <person name="Cruzado L."/>
            <person name="Jimenez J."/>
            <person name="Sanchez M."/>
            <person name="del Rey F."/>
            <person name="Benito J."/>
            <person name="Dominguez A."/>
            <person name="Revuelta J.L."/>
            <person name="Moreno S."/>
            <person name="Armstrong J."/>
            <person name="Forsburg S.L."/>
            <person name="Cerutti L."/>
            <person name="Lowe T."/>
            <person name="McCombie W.R."/>
            <person name="Paulsen I."/>
            <person name="Potashkin J."/>
            <person name="Shpakovski G.V."/>
            <person name="Ussery D."/>
            <person name="Barrell B.G."/>
            <person name="Nurse P."/>
        </authorList>
    </citation>
    <scope>NUCLEOTIDE SEQUENCE [LARGE SCALE GENOMIC DNA]</scope>
    <source>
        <strain>972 / ATCC 24843</strain>
    </source>
</reference>
<reference key="2">
    <citation type="journal article" date="2006" name="Nat. Biotechnol.">
        <title>ORFeome cloning and global analysis of protein localization in the fission yeast Schizosaccharomyces pombe.</title>
        <authorList>
            <person name="Matsuyama A."/>
            <person name="Arai R."/>
            <person name="Yashiroda Y."/>
            <person name="Shirai A."/>
            <person name="Kamata A."/>
            <person name="Sekido S."/>
            <person name="Kobayashi Y."/>
            <person name="Hashimoto A."/>
            <person name="Hamamoto M."/>
            <person name="Hiraoka Y."/>
            <person name="Horinouchi S."/>
            <person name="Yoshida M."/>
        </authorList>
    </citation>
    <scope>SUBCELLULAR LOCATION [LARGE SCALE ANALYSIS]</scope>
</reference>
<sequence length="409" mass="47029">MEYSEEGWMDQADSFPPRLLAIFFALFDPLQGPIVACEAPAGSVTNVDGGKNCLLPFETISDYVIPKRELCNKTITVCTNHYQVIGHPISIIGSNYERNALIFNMCMIFHEEEDSACYIPLVKRLARNLEVLEKQIHYISDLNKRPVIFSVIEQILEDMNNFCECMIQLDDQNSINIKLFPVFPSPPTVKSFHVPILTAQLDLLMDKNWDMTVQKVYPFINGINSVQRIAELANVSYRSCQKCMEHFLYYGCLIIADIFQFHNIYAMTTNAPNLLQDPDFQRECTAYVSTNSSNAKNVTFATIFKLYCSLRQGLRVKDWMNENKEIFKGLDVRRLISFGTIKGLIYRVHKYPYLERRTMRNNLTEEEKKLLGLLDGKHHFDELCVTLKKSPKVVNEMIAGLGDACFIYV</sequence>
<protein>
    <recommendedName>
        <fullName>Nitrogen permease regulator 2 homolog</fullName>
    </recommendedName>
</protein>
<organism>
    <name type="scientific">Schizosaccharomyces pombe (strain 972 / ATCC 24843)</name>
    <name type="common">Fission yeast</name>
    <dbReference type="NCBI Taxonomy" id="284812"/>
    <lineage>
        <taxon>Eukaryota</taxon>
        <taxon>Fungi</taxon>
        <taxon>Dikarya</taxon>
        <taxon>Ascomycota</taxon>
        <taxon>Taphrinomycotina</taxon>
        <taxon>Schizosaccharomycetes</taxon>
        <taxon>Schizosaccharomycetales</taxon>
        <taxon>Schizosaccharomycetaceae</taxon>
        <taxon>Schizosaccharomyces</taxon>
    </lineage>
</organism>
<feature type="chain" id="PRO_0000339459" description="Nitrogen permease regulator 2 homolog">
    <location>
        <begin position="1"/>
        <end position="409"/>
    </location>
</feature>
<accession>O42857</accession>
<name>NPR2_SCHPO</name>
<dbReference type="EMBL" id="CU329670">
    <property type="protein sequence ID" value="CAB16240.1"/>
    <property type="molecule type" value="Genomic_DNA"/>
</dbReference>
<dbReference type="PIR" id="T38296">
    <property type="entry name" value="T38296"/>
</dbReference>
<dbReference type="SMR" id="O42857"/>
<dbReference type="BioGRID" id="278331">
    <property type="interactions" value="15"/>
</dbReference>
<dbReference type="FunCoup" id="O42857">
    <property type="interactions" value="169"/>
</dbReference>
<dbReference type="STRING" id="284812.O42857"/>
<dbReference type="PaxDb" id="4896-SPAC23H3.03c.1"/>
<dbReference type="EnsemblFungi" id="SPAC23H3.03c.1">
    <property type="protein sequence ID" value="SPAC23H3.03c.1:pep"/>
    <property type="gene ID" value="SPAC23H3.03c"/>
</dbReference>
<dbReference type="KEGG" id="spo:2541840"/>
<dbReference type="PomBase" id="SPAC23H3.03c"/>
<dbReference type="VEuPathDB" id="FungiDB:SPAC23H3.03c"/>
<dbReference type="eggNOG" id="KOG3789">
    <property type="taxonomic scope" value="Eukaryota"/>
</dbReference>
<dbReference type="HOGENOM" id="CLU_014995_3_1_1"/>
<dbReference type="InParanoid" id="O42857"/>
<dbReference type="OMA" id="IVMHKPD"/>
<dbReference type="PhylomeDB" id="O42857"/>
<dbReference type="PRO" id="PR:O42857"/>
<dbReference type="Proteomes" id="UP000002485">
    <property type="component" value="Chromosome I"/>
</dbReference>
<dbReference type="GO" id="GO:0005829">
    <property type="term" value="C:cytosol"/>
    <property type="evidence" value="ECO:0007005"/>
    <property type="project" value="PomBase"/>
</dbReference>
<dbReference type="GO" id="GO:1990130">
    <property type="term" value="C:GATOR1 complex"/>
    <property type="evidence" value="ECO:0000315"/>
    <property type="project" value="PomBase"/>
</dbReference>
<dbReference type="GO" id="GO:0005634">
    <property type="term" value="C:nucleus"/>
    <property type="evidence" value="ECO:0007005"/>
    <property type="project" value="PomBase"/>
</dbReference>
<dbReference type="GO" id="GO:0005774">
    <property type="term" value="C:vacuolar membrane"/>
    <property type="evidence" value="ECO:0000269"/>
    <property type="project" value="PomBase"/>
</dbReference>
<dbReference type="GO" id="GO:0005096">
    <property type="term" value="F:GTPase activator activity"/>
    <property type="evidence" value="ECO:0000269"/>
    <property type="project" value="PomBase"/>
</dbReference>
<dbReference type="GO" id="GO:1904262">
    <property type="term" value="P:negative regulation of TORC1 signaling"/>
    <property type="evidence" value="ECO:0000315"/>
    <property type="project" value="PomBase"/>
</dbReference>
<dbReference type="GO" id="GO:0010508">
    <property type="term" value="P:positive regulation of autophagy"/>
    <property type="evidence" value="ECO:0000318"/>
    <property type="project" value="GO_Central"/>
</dbReference>
<dbReference type="InterPro" id="IPR009348">
    <property type="entry name" value="NPR2-like"/>
</dbReference>
<dbReference type="PANTHER" id="PTHR12991:SF10">
    <property type="entry name" value="GATOR COMPLEX PROTEIN NPRL2"/>
    <property type="match status" value="1"/>
</dbReference>
<dbReference type="PANTHER" id="PTHR12991">
    <property type="entry name" value="NITROGEN PERMEASE REGULATOR 2/TUMOR SUPPRESSOR CANDIDATE 4"/>
    <property type="match status" value="1"/>
</dbReference>
<dbReference type="Pfam" id="PF06218">
    <property type="entry name" value="NPR2"/>
    <property type="match status" value="1"/>
</dbReference>
<keyword id="KW-0963">Cytoplasm</keyword>
<keyword id="KW-0539">Nucleus</keyword>
<keyword id="KW-1185">Reference proteome</keyword>
<keyword id="KW-0804">Transcription</keyword>
<keyword id="KW-0805">Transcription regulation</keyword>
<gene>
    <name type="ORF">SPAC23H3.03c</name>
</gene>
<proteinExistence type="inferred from homology"/>
<comment type="function">
    <text evidence="1">Mediates inactivation of the TORC1 complex in response to amino acid starvation. Post-transcriptional regulator of nitrogen permeases (By similarity).</text>
</comment>
<comment type="subcellular location">
    <subcellularLocation>
        <location evidence="2">Cytoplasm</location>
    </subcellularLocation>
    <subcellularLocation>
        <location evidence="2">Nucleus</location>
    </subcellularLocation>
</comment>
<comment type="similarity">
    <text evidence="3">Belongs to the NPR2 family.</text>
</comment>